<gene>
    <name evidence="1" type="primary">ribH</name>
    <name type="ordered locus">CAB862</name>
</gene>
<proteinExistence type="inferred from homology"/>
<sequence length="154" mass="16396">MKTFKGIASAKDMRVAIVGSCFNGPIADALVSGAAQTFLELGGAEDRLTIVRVPGAFEIPCTLKKLLTSGIEYHAIVACGVLIKGETTHYDHIADQVSARISELSVEYNLPITFSIITAPCVDSAWQRAGIKGSHLGVSGMRTALEMADLFKKL</sequence>
<reference key="1">
    <citation type="journal article" date="2005" name="Genome Res.">
        <title>The Chlamydophila abortus genome sequence reveals an array of variable proteins that contribute to interspecies variation.</title>
        <authorList>
            <person name="Thomson N.R."/>
            <person name="Yeats C."/>
            <person name="Bell K."/>
            <person name="Holden M.T.G."/>
            <person name="Bentley S.D."/>
            <person name="Livingstone M."/>
            <person name="Cerdeno-Tarraga A.-M."/>
            <person name="Harris B."/>
            <person name="Doggett J."/>
            <person name="Ormond D."/>
            <person name="Mungall K."/>
            <person name="Clarke K."/>
            <person name="Feltwell T."/>
            <person name="Hance Z."/>
            <person name="Sanders M."/>
            <person name="Quail M.A."/>
            <person name="Price C."/>
            <person name="Barrell B.G."/>
            <person name="Parkhill J."/>
            <person name="Longbottom D."/>
        </authorList>
    </citation>
    <scope>NUCLEOTIDE SEQUENCE [LARGE SCALE GENOMIC DNA]</scope>
    <source>
        <strain>DSM 27085 / S26/3</strain>
    </source>
</reference>
<name>RISB_CHLAB</name>
<accession>Q5L4Z3</accession>
<dbReference type="EC" id="2.5.1.78" evidence="1"/>
<dbReference type="EMBL" id="CR848038">
    <property type="protein sequence ID" value="CAH64302.1"/>
    <property type="molecule type" value="Genomic_DNA"/>
</dbReference>
<dbReference type="RefSeq" id="WP_006344465.1">
    <property type="nucleotide sequence ID" value="NC_004552.2"/>
</dbReference>
<dbReference type="SMR" id="Q5L4Z3"/>
<dbReference type="GeneID" id="93024418"/>
<dbReference type="KEGG" id="cab:CAB862"/>
<dbReference type="eggNOG" id="COG0054">
    <property type="taxonomic scope" value="Bacteria"/>
</dbReference>
<dbReference type="HOGENOM" id="CLU_089358_1_1_0"/>
<dbReference type="OrthoDB" id="9809709at2"/>
<dbReference type="UniPathway" id="UPA00275">
    <property type="reaction ID" value="UER00404"/>
</dbReference>
<dbReference type="Proteomes" id="UP000001012">
    <property type="component" value="Chromosome"/>
</dbReference>
<dbReference type="GO" id="GO:0005829">
    <property type="term" value="C:cytosol"/>
    <property type="evidence" value="ECO:0007669"/>
    <property type="project" value="TreeGrafter"/>
</dbReference>
<dbReference type="GO" id="GO:0009349">
    <property type="term" value="C:riboflavin synthase complex"/>
    <property type="evidence" value="ECO:0007669"/>
    <property type="project" value="InterPro"/>
</dbReference>
<dbReference type="GO" id="GO:0000906">
    <property type="term" value="F:6,7-dimethyl-8-ribityllumazine synthase activity"/>
    <property type="evidence" value="ECO:0007669"/>
    <property type="project" value="UniProtKB-UniRule"/>
</dbReference>
<dbReference type="GO" id="GO:0009231">
    <property type="term" value="P:riboflavin biosynthetic process"/>
    <property type="evidence" value="ECO:0007669"/>
    <property type="project" value="UniProtKB-UniRule"/>
</dbReference>
<dbReference type="CDD" id="cd09209">
    <property type="entry name" value="Lumazine_synthase-I"/>
    <property type="match status" value="1"/>
</dbReference>
<dbReference type="Gene3D" id="3.40.50.960">
    <property type="entry name" value="Lumazine/riboflavin synthase"/>
    <property type="match status" value="1"/>
</dbReference>
<dbReference type="HAMAP" id="MF_00178">
    <property type="entry name" value="Lumazine_synth"/>
    <property type="match status" value="1"/>
</dbReference>
<dbReference type="InterPro" id="IPR034964">
    <property type="entry name" value="LS"/>
</dbReference>
<dbReference type="InterPro" id="IPR002180">
    <property type="entry name" value="LS/RS"/>
</dbReference>
<dbReference type="InterPro" id="IPR036467">
    <property type="entry name" value="LS/RS_sf"/>
</dbReference>
<dbReference type="NCBIfam" id="TIGR00114">
    <property type="entry name" value="lumazine-synth"/>
    <property type="match status" value="1"/>
</dbReference>
<dbReference type="PANTHER" id="PTHR21058:SF0">
    <property type="entry name" value="6,7-DIMETHYL-8-RIBITYLLUMAZINE SYNTHASE"/>
    <property type="match status" value="1"/>
</dbReference>
<dbReference type="PANTHER" id="PTHR21058">
    <property type="entry name" value="6,7-DIMETHYL-8-RIBITYLLUMAZINE SYNTHASE DMRL SYNTHASE LUMAZINE SYNTHASE"/>
    <property type="match status" value="1"/>
</dbReference>
<dbReference type="Pfam" id="PF00885">
    <property type="entry name" value="DMRL_synthase"/>
    <property type="match status" value="1"/>
</dbReference>
<dbReference type="SUPFAM" id="SSF52121">
    <property type="entry name" value="Lumazine synthase"/>
    <property type="match status" value="1"/>
</dbReference>
<feature type="chain" id="PRO_1000040395" description="6,7-dimethyl-8-ribityllumazine synthase">
    <location>
        <begin position="1"/>
        <end position="154"/>
    </location>
</feature>
<feature type="active site" description="Proton donor" evidence="1">
    <location>
        <position position="89"/>
    </location>
</feature>
<feature type="binding site" evidence="1">
    <location>
        <position position="22"/>
    </location>
    <ligand>
        <name>5-amino-6-(D-ribitylamino)uracil</name>
        <dbReference type="ChEBI" id="CHEBI:15934"/>
    </ligand>
</feature>
<feature type="binding site" evidence="1">
    <location>
        <begin position="56"/>
        <end position="58"/>
    </location>
    <ligand>
        <name>5-amino-6-(D-ribitylamino)uracil</name>
        <dbReference type="ChEBI" id="CHEBI:15934"/>
    </ligand>
</feature>
<feature type="binding site" evidence="1">
    <location>
        <begin position="81"/>
        <end position="83"/>
    </location>
    <ligand>
        <name>5-amino-6-(D-ribitylamino)uracil</name>
        <dbReference type="ChEBI" id="CHEBI:15934"/>
    </ligand>
</feature>
<feature type="binding site" evidence="1">
    <location>
        <begin position="86"/>
        <end position="87"/>
    </location>
    <ligand>
        <name>(2S)-2-hydroxy-3-oxobutyl phosphate</name>
        <dbReference type="ChEBI" id="CHEBI:58830"/>
    </ligand>
</feature>
<feature type="binding site" evidence="1">
    <location>
        <position position="114"/>
    </location>
    <ligand>
        <name>5-amino-6-(D-ribitylamino)uracil</name>
        <dbReference type="ChEBI" id="CHEBI:15934"/>
    </ligand>
</feature>
<feature type="binding site" evidence="1">
    <location>
        <position position="128"/>
    </location>
    <ligand>
        <name>(2S)-2-hydroxy-3-oxobutyl phosphate</name>
        <dbReference type="ChEBI" id="CHEBI:58830"/>
    </ligand>
</feature>
<keyword id="KW-0686">Riboflavin biosynthesis</keyword>
<keyword id="KW-0808">Transferase</keyword>
<protein>
    <recommendedName>
        <fullName evidence="1">6,7-dimethyl-8-ribityllumazine synthase</fullName>
        <shortName evidence="1">DMRL synthase</shortName>
        <shortName evidence="1">LS</shortName>
        <shortName evidence="1">Lumazine synthase</shortName>
        <ecNumber evidence="1">2.5.1.78</ecNumber>
    </recommendedName>
</protein>
<organism>
    <name type="scientific">Chlamydia abortus (strain DSM 27085 / S26/3)</name>
    <name type="common">Chlamydophila abortus</name>
    <dbReference type="NCBI Taxonomy" id="218497"/>
    <lineage>
        <taxon>Bacteria</taxon>
        <taxon>Pseudomonadati</taxon>
        <taxon>Chlamydiota</taxon>
        <taxon>Chlamydiia</taxon>
        <taxon>Chlamydiales</taxon>
        <taxon>Chlamydiaceae</taxon>
        <taxon>Chlamydia/Chlamydophila group</taxon>
        <taxon>Chlamydia</taxon>
    </lineage>
</organism>
<evidence type="ECO:0000255" key="1">
    <source>
        <dbReference type="HAMAP-Rule" id="MF_00178"/>
    </source>
</evidence>
<comment type="function">
    <text evidence="1">Catalyzes the formation of 6,7-dimethyl-8-ribityllumazine by condensation of 5-amino-6-(D-ribitylamino)uracil with 3,4-dihydroxy-2-butanone 4-phosphate. This is the penultimate step in the biosynthesis of riboflavin.</text>
</comment>
<comment type="catalytic activity">
    <reaction evidence="1">
        <text>(2S)-2-hydroxy-3-oxobutyl phosphate + 5-amino-6-(D-ribitylamino)uracil = 6,7-dimethyl-8-(1-D-ribityl)lumazine + phosphate + 2 H2O + H(+)</text>
        <dbReference type="Rhea" id="RHEA:26152"/>
        <dbReference type="ChEBI" id="CHEBI:15377"/>
        <dbReference type="ChEBI" id="CHEBI:15378"/>
        <dbReference type="ChEBI" id="CHEBI:15934"/>
        <dbReference type="ChEBI" id="CHEBI:43474"/>
        <dbReference type="ChEBI" id="CHEBI:58201"/>
        <dbReference type="ChEBI" id="CHEBI:58830"/>
        <dbReference type="EC" id="2.5.1.78"/>
    </reaction>
</comment>
<comment type="pathway">
    <text evidence="1">Cofactor biosynthesis; riboflavin biosynthesis; riboflavin from 2-hydroxy-3-oxobutyl phosphate and 5-amino-6-(D-ribitylamino)uracil: step 1/2.</text>
</comment>
<comment type="similarity">
    <text evidence="1">Belongs to the DMRL synthase family.</text>
</comment>